<gene>
    <name type="ordered locus">CLL_A1176</name>
</gene>
<proteinExistence type="inferred from homology"/>
<sequence length="137" mass="15267">MRILGLDLGKKTIGVAVSDPLGFTAQGITTIRRANKEKDMEELRKICDEYKVETIVIGLPKNMNGTIGPSGEIAMEMGKLVEEALNIKVEFWDERLTTVAAHKAMLEADLSRSKRKKIVDKVASTYILQGYLDRISK</sequence>
<accession>B2THN2</accession>
<keyword id="KW-0963">Cytoplasm</keyword>
<keyword id="KW-0378">Hydrolase</keyword>
<keyword id="KW-0540">Nuclease</keyword>
<keyword id="KW-0690">Ribosome biogenesis</keyword>
<reference key="1">
    <citation type="submission" date="2008-04" db="EMBL/GenBank/DDBJ databases">
        <title>Complete sequence of Clostridium botulinum strain Eklund.</title>
        <authorList>
            <person name="Brinkac L.M."/>
            <person name="Brown J.L."/>
            <person name="Bruce D."/>
            <person name="Detter C."/>
            <person name="Munk C."/>
            <person name="Smith L.A."/>
            <person name="Smith T.J."/>
            <person name="Sutton G."/>
            <person name="Brettin T.S."/>
        </authorList>
    </citation>
    <scope>NUCLEOTIDE SEQUENCE [LARGE SCALE GENOMIC DNA]</scope>
    <source>
        <strain>Eklund 17B / Type B</strain>
    </source>
</reference>
<dbReference type="EC" id="3.1.-.-" evidence="1"/>
<dbReference type="EMBL" id="CP001056">
    <property type="protein sequence ID" value="ACD22458.1"/>
    <property type="molecule type" value="Genomic_DNA"/>
</dbReference>
<dbReference type="SMR" id="B2THN2"/>
<dbReference type="KEGG" id="cbk:CLL_A1176"/>
<dbReference type="PATRIC" id="fig|935198.13.peg.1121"/>
<dbReference type="HOGENOM" id="CLU_098240_2_0_9"/>
<dbReference type="Proteomes" id="UP000001195">
    <property type="component" value="Chromosome"/>
</dbReference>
<dbReference type="GO" id="GO:0005829">
    <property type="term" value="C:cytosol"/>
    <property type="evidence" value="ECO:0007669"/>
    <property type="project" value="TreeGrafter"/>
</dbReference>
<dbReference type="GO" id="GO:0004518">
    <property type="term" value="F:nuclease activity"/>
    <property type="evidence" value="ECO:0007669"/>
    <property type="project" value="UniProtKB-KW"/>
</dbReference>
<dbReference type="GO" id="GO:0000967">
    <property type="term" value="P:rRNA 5'-end processing"/>
    <property type="evidence" value="ECO:0007669"/>
    <property type="project" value="UniProtKB-UniRule"/>
</dbReference>
<dbReference type="CDD" id="cd16964">
    <property type="entry name" value="YqgF"/>
    <property type="match status" value="1"/>
</dbReference>
<dbReference type="Gene3D" id="3.30.420.140">
    <property type="entry name" value="YqgF/RNase H-like domain"/>
    <property type="match status" value="1"/>
</dbReference>
<dbReference type="HAMAP" id="MF_00651">
    <property type="entry name" value="Nuclease_YqgF"/>
    <property type="match status" value="1"/>
</dbReference>
<dbReference type="InterPro" id="IPR012337">
    <property type="entry name" value="RNaseH-like_sf"/>
</dbReference>
<dbReference type="InterPro" id="IPR005227">
    <property type="entry name" value="YqgF"/>
</dbReference>
<dbReference type="InterPro" id="IPR006641">
    <property type="entry name" value="YqgF/RNaseH-like_dom"/>
</dbReference>
<dbReference type="InterPro" id="IPR037027">
    <property type="entry name" value="YqgF/RNaseH-like_dom_sf"/>
</dbReference>
<dbReference type="NCBIfam" id="TIGR00250">
    <property type="entry name" value="RNAse_H_YqgF"/>
    <property type="match status" value="1"/>
</dbReference>
<dbReference type="PANTHER" id="PTHR33317">
    <property type="entry name" value="POLYNUCLEOTIDYL TRANSFERASE, RIBONUCLEASE H-LIKE SUPERFAMILY PROTEIN"/>
    <property type="match status" value="1"/>
</dbReference>
<dbReference type="PANTHER" id="PTHR33317:SF4">
    <property type="entry name" value="POLYNUCLEOTIDYL TRANSFERASE, RIBONUCLEASE H-LIKE SUPERFAMILY PROTEIN"/>
    <property type="match status" value="1"/>
</dbReference>
<dbReference type="Pfam" id="PF03652">
    <property type="entry name" value="RuvX"/>
    <property type="match status" value="1"/>
</dbReference>
<dbReference type="SMART" id="SM00732">
    <property type="entry name" value="YqgFc"/>
    <property type="match status" value="1"/>
</dbReference>
<dbReference type="SUPFAM" id="SSF53098">
    <property type="entry name" value="Ribonuclease H-like"/>
    <property type="match status" value="1"/>
</dbReference>
<feature type="chain" id="PRO_1000131014" description="Putative pre-16S rRNA nuclease">
    <location>
        <begin position="1"/>
        <end position="137"/>
    </location>
</feature>
<evidence type="ECO:0000255" key="1">
    <source>
        <dbReference type="HAMAP-Rule" id="MF_00651"/>
    </source>
</evidence>
<organism>
    <name type="scientific">Clostridium botulinum (strain Eklund 17B / Type B)</name>
    <dbReference type="NCBI Taxonomy" id="935198"/>
    <lineage>
        <taxon>Bacteria</taxon>
        <taxon>Bacillati</taxon>
        <taxon>Bacillota</taxon>
        <taxon>Clostridia</taxon>
        <taxon>Eubacteriales</taxon>
        <taxon>Clostridiaceae</taxon>
        <taxon>Clostridium</taxon>
    </lineage>
</organism>
<protein>
    <recommendedName>
        <fullName evidence="1">Putative pre-16S rRNA nuclease</fullName>
        <ecNumber evidence="1">3.1.-.-</ecNumber>
    </recommendedName>
</protein>
<comment type="function">
    <text evidence="1">Could be a nuclease involved in processing of the 5'-end of pre-16S rRNA.</text>
</comment>
<comment type="subcellular location">
    <subcellularLocation>
        <location evidence="1">Cytoplasm</location>
    </subcellularLocation>
</comment>
<comment type="similarity">
    <text evidence="1">Belongs to the YqgF nuclease family.</text>
</comment>
<name>YQGF_CLOBB</name>